<reference key="1">
    <citation type="submission" date="2006-10" db="EMBL/GenBank/DDBJ databases">
        <authorList>
            <person name="Fleischmann R.D."/>
            <person name="Dodson R.J."/>
            <person name="Haft D.H."/>
            <person name="Merkel J.S."/>
            <person name="Nelson W.C."/>
            <person name="Fraser C.M."/>
        </authorList>
    </citation>
    <scope>NUCLEOTIDE SEQUENCE [LARGE SCALE GENOMIC DNA]</scope>
    <source>
        <strain>ATCC 700084 / mc(2)155</strain>
    </source>
</reference>
<reference key="2">
    <citation type="journal article" date="2007" name="Genome Biol.">
        <title>Interrupted coding sequences in Mycobacterium smegmatis: authentic mutations or sequencing errors?</title>
        <authorList>
            <person name="Deshayes C."/>
            <person name="Perrodou E."/>
            <person name="Gallien S."/>
            <person name="Euphrasie D."/>
            <person name="Schaeffer C."/>
            <person name="Van-Dorsselaer A."/>
            <person name="Poch O."/>
            <person name="Lecompte O."/>
            <person name="Reyrat J.-M."/>
        </authorList>
    </citation>
    <scope>NUCLEOTIDE SEQUENCE [LARGE SCALE GENOMIC DNA]</scope>
    <source>
        <strain>ATCC 700084 / mc(2)155</strain>
    </source>
</reference>
<reference key="3">
    <citation type="journal article" date="2009" name="Genome Res.">
        <title>Ortho-proteogenomics: multiple proteomes investigation through orthology and a new MS-based protocol.</title>
        <authorList>
            <person name="Gallien S."/>
            <person name="Perrodou E."/>
            <person name="Carapito C."/>
            <person name="Deshayes C."/>
            <person name="Reyrat J.-M."/>
            <person name="Van Dorsselaer A."/>
            <person name="Poch O."/>
            <person name="Schaeffer C."/>
            <person name="Lecompte O."/>
        </authorList>
    </citation>
    <scope>NUCLEOTIDE SEQUENCE [LARGE SCALE GENOMIC DNA]</scope>
    <source>
        <strain>ATCC 700084 / mc(2)155</strain>
    </source>
</reference>
<name>GCS23_MYCS2</name>
<accession>A0R3T8</accession>
<accession>I7GEI1</accession>
<proteinExistence type="inferred from homology"/>
<keyword id="KW-0067">ATP-binding</keyword>
<keyword id="KW-0436">Ligase</keyword>
<keyword id="KW-0547">Nucleotide-binding</keyword>
<keyword id="KW-1185">Reference proteome</keyword>
<comment type="function">
    <text evidence="1">ATP-dependent carboxylate-amine ligase which exhibits weak glutamate--cysteine ligase activity.</text>
</comment>
<comment type="catalytic activity">
    <reaction evidence="1">
        <text>L-cysteine + L-glutamate + ATP = gamma-L-glutamyl-L-cysteine + ADP + phosphate + H(+)</text>
        <dbReference type="Rhea" id="RHEA:13285"/>
        <dbReference type="ChEBI" id="CHEBI:15378"/>
        <dbReference type="ChEBI" id="CHEBI:29985"/>
        <dbReference type="ChEBI" id="CHEBI:30616"/>
        <dbReference type="ChEBI" id="CHEBI:35235"/>
        <dbReference type="ChEBI" id="CHEBI:43474"/>
        <dbReference type="ChEBI" id="CHEBI:58173"/>
        <dbReference type="ChEBI" id="CHEBI:456216"/>
        <dbReference type="EC" id="6.3.2.2"/>
    </reaction>
</comment>
<comment type="similarity">
    <text evidence="1">Belongs to the glutamate--cysteine ligase type 2 family. YbdK subfamily.</text>
</comment>
<organism>
    <name type="scientific">Mycolicibacterium smegmatis (strain ATCC 700084 / mc(2)155)</name>
    <name type="common">Mycobacterium smegmatis</name>
    <dbReference type="NCBI Taxonomy" id="246196"/>
    <lineage>
        <taxon>Bacteria</taxon>
        <taxon>Bacillati</taxon>
        <taxon>Actinomycetota</taxon>
        <taxon>Actinomycetes</taxon>
        <taxon>Mycobacteriales</taxon>
        <taxon>Mycobacteriaceae</taxon>
        <taxon>Mycolicibacterium</taxon>
    </lineage>
</organism>
<dbReference type="EC" id="6.3.2.2" evidence="1"/>
<dbReference type="EMBL" id="CP000480">
    <property type="protein sequence ID" value="ABK73440.1"/>
    <property type="molecule type" value="Genomic_DNA"/>
</dbReference>
<dbReference type="EMBL" id="CP001663">
    <property type="protein sequence ID" value="AFP41881.1"/>
    <property type="molecule type" value="Genomic_DNA"/>
</dbReference>
<dbReference type="RefSeq" id="WP_011730643.1">
    <property type="nucleotide sequence ID" value="NZ_SIJM01000034.1"/>
</dbReference>
<dbReference type="RefSeq" id="YP_889826.1">
    <property type="nucleotide sequence ID" value="NC_008596.1"/>
</dbReference>
<dbReference type="SMR" id="A0R3T8"/>
<dbReference type="STRING" id="246196.MSMEG_5590"/>
<dbReference type="PaxDb" id="246196-MSMEI_5440"/>
<dbReference type="KEGG" id="msb:LJ00_27645"/>
<dbReference type="KEGG" id="msg:MSMEI_5440"/>
<dbReference type="KEGG" id="msm:MSMEG_5590"/>
<dbReference type="PATRIC" id="fig|246196.19.peg.5451"/>
<dbReference type="eggNOG" id="COG2170">
    <property type="taxonomic scope" value="Bacteria"/>
</dbReference>
<dbReference type="OrthoDB" id="9803842at2"/>
<dbReference type="Proteomes" id="UP000000757">
    <property type="component" value="Chromosome"/>
</dbReference>
<dbReference type="Proteomes" id="UP000006158">
    <property type="component" value="Chromosome"/>
</dbReference>
<dbReference type="GO" id="GO:0005524">
    <property type="term" value="F:ATP binding"/>
    <property type="evidence" value="ECO:0007669"/>
    <property type="project" value="UniProtKB-KW"/>
</dbReference>
<dbReference type="GO" id="GO:0004357">
    <property type="term" value="F:glutamate-cysteine ligase activity"/>
    <property type="evidence" value="ECO:0007669"/>
    <property type="project" value="UniProtKB-EC"/>
</dbReference>
<dbReference type="GO" id="GO:0042398">
    <property type="term" value="P:modified amino acid biosynthetic process"/>
    <property type="evidence" value="ECO:0007669"/>
    <property type="project" value="InterPro"/>
</dbReference>
<dbReference type="Gene3D" id="3.30.590.20">
    <property type="match status" value="1"/>
</dbReference>
<dbReference type="HAMAP" id="MF_01609">
    <property type="entry name" value="Glu_cys_ligase_2"/>
    <property type="match status" value="1"/>
</dbReference>
<dbReference type="InterPro" id="IPR050141">
    <property type="entry name" value="GCL_type2/YbdK_subfam"/>
</dbReference>
<dbReference type="InterPro" id="IPR006336">
    <property type="entry name" value="GCS2"/>
</dbReference>
<dbReference type="InterPro" id="IPR014746">
    <property type="entry name" value="Gln_synth/guanido_kin_cat_dom"/>
</dbReference>
<dbReference type="InterPro" id="IPR011793">
    <property type="entry name" value="YbdK"/>
</dbReference>
<dbReference type="NCBIfam" id="TIGR02050">
    <property type="entry name" value="gshA_cyan_rel"/>
    <property type="match status" value="1"/>
</dbReference>
<dbReference type="NCBIfam" id="NF010041">
    <property type="entry name" value="PRK13517.1-1"/>
    <property type="match status" value="1"/>
</dbReference>
<dbReference type="PANTHER" id="PTHR36510">
    <property type="entry name" value="GLUTAMATE--CYSTEINE LIGASE 2-RELATED"/>
    <property type="match status" value="1"/>
</dbReference>
<dbReference type="PANTHER" id="PTHR36510:SF1">
    <property type="entry name" value="GLUTAMATE--CYSTEINE LIGASE 2-RELATED"/>
    <property type="match status" value="1"/>
</dbReference>
<dbReference type="Pfam" id="PF04107">
    <property type="entry name" value="GCS2"/>
    <property type="match status" value="1"/>
</dbReference>
<dbReference type="SUPFAM" id="SSF55931">
    <property type="entry name" value="Glutamine synthetase/guanido kinase"/>
    <property type="match status" value="1"/>
</dbReference>
<evidence type="ECO:0000255" key="1">
    <source>
        <dbReference type="HAMAP-Rule" id="MF_01609"/>
    </source>
</evidence>
<sequence length="365" mass="39966">MSNNPTFGVEEEFLLVDPRTGEPIARNKAVAETAAAKGVDLQLELTSCQVETATEVMDNSDDLRKALLRLRRVATDAAETNGARLLAAGLPPTVPHKFPITPTPRYRRIGHRFGMIAHEQGICGCHVHVEVPSRDAAIRVSNRLRPWLHLLLALTANSAIYRGSDSGYATFRSVLWARWPSAGPPPFFDSEAQYDATVAMLEDAGAALDDGMIYWDVRPSNKFPTVEVRVSDVPATVAETVLFATLVRAAVMTATEAEKNGEPVVPLTDYVLKAAYWKSARDGLDGRTIDLAESHAVAPTVELLTNFVEHLRPALEQLGEYDTVRGELARVIETGNGAMRQRRAFERRREAADVIDELAAATIAE</sequence>
<gene>
    <name type="ordered locus">MSMEG_5590</name>
    <name type="ordered locus">MSMEI_5440</name>
</gene>
<feature type="chain" id="PRO_0000323507" description="Putative glutamate--cysteine ligase 2-3">
    <location>
        <begin position="1"/>
        <end position="365"/>
    </location>
</feature>
<protein>
    <recommendedName>
        <fullName evidence="1">Putative glutamate--cysteine ligase 2-3</fullName>
        <ecNumber evidence="1">6.3.2.2</ecNumber>
    </recommendedName>
    <alternativeName>
        <fullName evidence="1">Gamma-glutamylcysteine synthetase 2-3</fullName>
        <shortName evidence="1">GCS 2-3</shortName>
        <shortName evidence="1">Gamma-GCS 2-3</shortName>
    </alternativeName>
</protein>